<protein>
    <recommendedName>
        <fullName>UV radiation resistance-associated protein</fullName>
    </recommendedName>
</protein>
<sequence length="698" mass="77525">MSSCASLGGPVPLPPPGPSAALTSGAPARALHVELPSQQRRLRHLRNIAARNIVNRNGHQLLDTYFTLHLCDNEKIFKEFYRSEVIKNSLNPTWRSLDFGIMPDRLDTSVSCFVVKIWGGKEEAFQLLIEWKVYLDGLKYLGQQIHARNQNEIIFGLNDGYYGAPCEHKGHPNAQKNLLQVDQNCVRNSYDVFSLLRLHRAQCAIKQTQVTVQRLGKEIEEKLRLTSTSNELKKESECLRLKILVLRNELERQKKALGREVAFLHKQQMALQDKGSAFSTEHGKLQLQKDSLSELRKECTAKRELFLKTNAQLTIRCRQLLSELSYIYPIDLNENKDYFVCGVKLPNSEDFQAKDDGSIAVALGYTAHLVSMISFFLQVPLRYPIIHKGSRSTIKDNINDKLTEKEREFPLYPKGGEKLQFDYGVYLLNKNIAQLRYQHGLGTPDLRQTLPNLKNFMEHGLMVRCDRHHISNAIPVPKRQSSTFGGADGGFSAGIPSPDKVHRKRASSENERLQYKTPPPSYNSALTQPGVAMPTSGDSERKVAPLSSSLDTSLDFSKENKKAGVDLGSSVSGDHGNSDSGQEQGEALPGHLAAVNGTALPSEQAGPAGTLLPGSCHPAPSAELCCAVEQAEEIIGLEATGFTSGDQLEALSCIPVDSAVAVECDEQVLGEFEEFSRRIYALSENVSSFRRPRRSSDK</sequence>
<evidence type="ECO:0000250" key="1">
    <source>
        <dbReference type="UniProtKB" id="Q9P2Y5"/>
    </source>
</evidence>
<evidence type="ECO:0000255" key="2"/>
<evidence type="ECO:0000255" key="3">
    <source>
        <dbReference type="PROSITE-ProRule" id="PRU00041"/>
    </source>
</evidence>
<evidence type="ECO:0000256" key="4">
    <source>
        <dbReference type="SAM" id="MobiDB-lite"/>
    </source>
</evidence>
<evidence type="ECO:0000269" key="5">
    <source>
    </source>
</evidence>
<evidence type="ECO:0000305" key="6"/>
<evidence type="ECO:0000312" key="7">
    <source>
        <dbReference type="EMBL" id="AAH34176.1"/>
    </source>
</evidence>
<evidence type="ECO:0007744" key="8">
    <source>
    </source>
</evidence>
<evidence type="ECO:0007829" key="9">
    <source>
        <dbReference type="PDB" id="5YR0"/>
    </source>
</evidence>
<accession>Q8K245</accession>
<accession>Q8BVI8</accession>
<accession>Q8C0K8</accession>
<keyword id="KW-0002">3D-structure</keyword>
<keyword id="KW-0137">Centromere</keyword>
<keyword id="KW-0158">Chromosome</keyword>
<keyword id="KW-0175">Coiled coil</keyword>
<keyword id="KW-0968">Cytoplasmic vesicle</keyword>
<keyword id="KW-0227">DNA damage</keyword>
<keyword id="KW-0234">DNA repair</keyword>
<keyword id="KW-0256">Endoplasmic reticulum</keyword>
<keyword id="KW-0967">Endosome</keyword>
<keyword id="KW-0458">Lysosome</keyword>
<keyword id="KW-0597">Phosphoprotein</keyword>
<keyword id="KW-1185">Reference proteome</keyword>
<name>UVRAG_MOUSE</name>
<comment type="function">
    <text evidence="1">Versatile protein that is involved in regulation of different cellular pathways implicated in membrane trafficking. Involved in regulation of the COPI-dependent retrograde transport from Golgi and the endoplasmic reticulum by associating with the NRZ complex; the function is dependent on its binding to phosphatidylinositol 3-phosphate (PtdIns(3)P). During autophagy acts as a regulatory subunit of the alternative PI3K complex II (PI3KC3-C2) that mediates formation of phosphatidylinositol 3-phosphate and is believed to be involved in maturation of autophagosomes and endocytosis. Activates lipid kinase activity of PIK3C3. Involved in the regulation of degradative endocytic trafficking and cytokinesis, and in regulation of ATG9A transport from the Golgi to the autophagosome; the functions seems to implicate its association with PI3KC3-C2. Involved in maturation of autophagosomes and degradative endocytic trafficking independently of BECN1 but depending on its association with a class C Vps complex (possibly the HOPS complex); the association is also proposed to promote autophagosome recruitment and activation of Rab7 and endosome-endosome fusion events. Enhances class C Vps complex (possibly HOPS complex) association with a SNARE complex and promotes fusogenic SNARE complex formation during late endocytic membrane fusion. In case of negative-strand RNA virus infection is required for efficient virus entry, promotes endocytic transport of virions and is implicated in a VAMP8-specific fusogenic SNARE complex assembly.</text>
</comment>
<comment type="function">
    <text evidence="1">Involved in maintaining chromosomal stability. Promotes DNA double-strand break (DSB) repair by association with DNA-dependent protein kinase complex DNA-PK and activating it in non-homologous end joining (NHEJ). Required for centrosome stability and proper chromosome segregation.</text>
</comment>
<comment type="subunit">
    <text evidence="1 5">Component of the PI3K (PI3KC3/PI3K-III/class III phosphatidylinositol 3-kinase) complex II (PI3KC3-C2) in which the core composed of the catalytic subunit PIK3C3, the regulatory subunit PIK3R4 and BECN1 is associated with UVRAG; in the complex interacts directly with BECN1 (By similarity). PI3KC3-C2 can associate with further regulatory subunits such as RUBCN and probably SH3GLB1/Bif-1 (By similarity). Interacts with SH3GLB1; UVRAG bridges the interaction to BECN1 indicative for an association with the PI3K complex PI3KC3-C2 (By similarity). Interacts with RINT1 (By similarity). Associates with the NRZ complex under basal conditions and dissociates from it under autophagy conditions to associate with the PI3K complex; these complex associations seem to be mutually exclusive (By similarity). Interacts with VPS16; VPS11; VPS18; VPS33 (VPS33A or VPS33B) and VPS39; indicative for an association with a class C Vps tethering complex (possibly the HOPS complex) (By similarity). Interacts with RAB7A; RAB7A competes with UVRAG for RUBCN binding (By similarity). Interacts with STX7, VTI1B, STX8 (By similarity). Interacts with PRKDC, XRCC6 and XRCC5; indicative for an association with the DNA-dependent protein kinase complex DNA-PK (By similarity). Interacts with CEP63 (By similarity). Directly interacts with FEZ1 and SCOC; the interaction with SCOC is reduced by amino acid starvation, but the complex is stabilized in the presence of FEZ1 (By similarity). Interacts with BECN1P1/BECN2 (By similarity). Interacts with SLAMF1 (PubMed:22493499). Interacts with RUBCNL/PACER; promoting targeting of UVRAG to autophagosome (By similarity). Interacts with WNK1 (By similarity).</text>
</comment>
<comment type="subcellular location">
    <subcellularLocation>
        <location evidence="1">Late endosome</location>
    </subcellularLocation>
    <subcellularLocation>
        <location evidence="1">Lysosome</location>
    </subcellularLocation>
    <subcellularLocation>
        <location evidence="1">Cytoplasmic vesicle</location>
        <location evidence="1">Autophagosome</location>
    </subcellularLocation>
    <subcellularLocation>
        <location evidence="1">Early endosome</location>
    </subcellularLocation>
    <subcellularLocation>
        <location evidence="1">Endoplasmic reticulum</location>
    </subcellularLocation>
    <subcellularLocation>
        <location evidence="1">Midbody</location>
    </subcellularLocation>
    <subcellularLocation>
        <location evidence="1">Chromosome</location>
        <location evidence="1">Centromere</location>
    </subcellularLocation>
    <text evidence="1">Colocalizes with RAB9-positive compartments involved in retrograde transport from late endosomes to trans-Golgi network. Colocalization with early endosomes is only partial. Recruited to autophagosome following interaction with RUBCNL/PACER.</text>
</comment>
<comment type="PTM">
    <text evidence="1">Phosphorylated at Ser-497 by MTOR under basal conditions; increases the interaction with RUBCN implicated in inhibitory effect of RUBCN on PI3KC3 and decreases interaction with RAB7A, and VPS16 and VPS39 (indicative for a class C Vps complex, possibly the HOPS complex) (By similarity).</text>
</comment>
<organism evidence="7">
    <name type="scientific">Mus musculus</name>
    <name type="common">Mouse</name>
    <dbReference type="NCBI Taxonomy" id="10090"/>
    <lineage>
        <taxon>Eukaryota</taxon>
        <taxon>Metazoa</taxon>
        <taxon>Chordata</taxon>
        <taxon>Craniata</taxon>
        <taxon>Vertebrata</taxon>
        <taxon>Euteleostomi</taxon>
        <taxon>Mammalia</taxon>
        <taxon>Eutheria</taxon>
        <taxon>Euarchontoglires</taxon>
        <taxon>Glires</taxon>
        <taxon>Rodentia</taxon>
        <taxon>Myomorpha</taxon>
        <taxon>Muroidea</taxon>
        <taxon>Muridae</taxon>
        <taxon>Murinae</taxon>
        <taxon>Mus</taxon>
        <taxon>Mus</taxon>
    </lineage>
</organism>
<proteinExistence type="evidence at protein level"/>
<dbReference type="EMBL" id="AK030814">
    <property type="protein sequence ID" value="BAC27144.1"/>
    <property type="molecule type" value="mRNA"/>
</dbReference>
<dbReference type="EMBL" id="AK078085">
    <property type="protein sequence ID" value="BAC37120.1"/>
    <property type="molecule type" value="mRNA"/>
</dbReference>
<dbReference type="EMBL" id="AK154903">
    <property type="protein sequence ID" value="BAE32914.1"/>
    <property type="molecule type" value="mRNA"/>
</dbReference>
<dbReference type="EMBL" id="AC093351">
    <property type="status" value="NOT_ANNOTATED_CDS"/>
    <property type="molecule type" value="Genomic_DNA"/>
</dbReference>
<dbReference type="EMBL" id="AC115850">
    <property type="status" value="NOT_ANNOTATED_CDS"/>
    <property type="molecule type" value="Genomic_DNA"/>
</dbReference>
<dbReference type="EMBL" id="BC034176">
    <property type="protein sequence ID" value="AAH34176.1"/>
    <property type="molecule type" value="mRNA"/>
</dbReference>
<dbReference type="CCDS" id="CCDS21476.1"/>
<dbReference type="RefSeq" id="NP_848750.3">
    <property type="nucleotide sequence ID" value="NM_178635.3"/>
</dbReference>
<dbReference type="PDB" id="5YR0">
    <property type="method" value="X-ray"/>
    <property type="resolution" value="1.90 A"/>
    <property type="chains" value="B=228-275"/>
</dbReference>
<dbReference type="PDBsum" id="5YR0"/>
<dbReference type="SMR" id="Q8K245"/>
<dbReference type="ComplexPortal" id="CPX-76">
    <property type="entry name" value="Phosphatidylinositol 3-kinase complex, class III, UVRAG variant"/>
</dbReference>
<dbReference type="FunCoup" id="Q8K245">
    <property type="interactions" value="2751"/>
</dbReference>
<dbReference type="IntAct" id="Q8K245">
    <property type="interactions" value="17"/>
</dbReference>
<dbReference type="MINT" id="Q8K245"/>
<dbReference type="STRING" id="10090.ENSMUSP00000045297"/>
<dbReference type="iPTMnet" id="Q8K245"/>
<dbReference type="PhosphoSitePlus" id="Q8K245"/>
<dbReference type="jPOST" id="Q8K245"/>
<dbReference type="PaxDb" id="10090-ENSMUSP00000045297"/>
<dbReference type="ProteomicsDB" id="298259"/>
<dbReference type="Pumba" id="Q8K245"/>
<dbReference type="Antibodypedia" id="2165">
    <property type="antibodies" value="399 antibodies from 38 providers"/>
</dbReference>
<dbReference type="DNASU" id="78610"/>
<dbReference type="Ensembl" id="ENSMUST00000037968.10">
    <property type="protein sequence ID" value="ENSMUSP00000045297.9"/>
    <property type="gene ID" value="ENSMUSG00000035354.10"/>
</dbReference>
<dbReference type="GeneID" id="78610"/>
<dbReference type="KEGG" id="mmu:78610"/>
<dbReference type="UCSC" id="uc009ikz.2">
    <property type="organism name" value="mouse"/>
</dbReference>
<dbReference type="AGR" id="MGI:1925860"/>
<dbReference type="CTD" id="7405"/>
<dbReference type="MGI" id="MGI:1925860">
    <property type="gene designation" value="Uvrag"/>
</dbReference>
<dbReference type="VEuPathDB" id="HostDB:ENSMUSG00000035354"/>
<dbReference type="eggNOG" id="KOG2896">
    <property type="taxonomic scope" value="Eukaryota"/>
</dbReference>
<dbReference type="GeneTree" id="ENSGT00390000012877"/>
<dbReference type="InParanoid" id="Q8K245"/>
<dbReference type="OMA" id="HVDQNCV"/>
<dbReference type="OrthoDB" id="72772at2759"/>
<dbReference type="PhylomeDB" id="Q8K245"/>
<dbReference type="TreeFam" id="TF323546"/>
<dbReference type="Reactome" id="R-MMU-1632852">
    <property type="pathway name" value="Macroautophagy"/>
</dbReference>
<dbReference type="BioGRID-ORCS" id="78610">
    <property type="hits" value="8 hits in 114 CRISPR screens"/>
</dbReference>
<dbReference type="ChiTaRS" id="Uvrag">
    <property type="organism name" value="mouse"/>
</dbReference>
<dbReference type="PRO" id="PR:Q8K245"/>
<dbReference type="Proteomes" id="UP000000589">
    <property type="component" value="Chromosome 7"/>
</dbReference>
<dbReference type="RNAct" id="Q8K245">
    <property type="molecule type" value="protein"/>
</dbReference>
<dbReference type="Bgee" id="ENSMUSG00000035354">
    <property type="expression patterns" value="Expressed in gastrula and 262 other cell types or tissues"/>
</dbReference>
<dbReference type="ExpressionAtlas" id="Q8K245">
    <property type="expression patterns" value="baseline and differential"/>
</dbReference>
<dbReference type="GO" id="GO:0000421">
    <property type="term" value="C:autophagosome membrane"/>
    <property type="evidence" value="ECO:0000250"/>
    <property type="project" value="UniProtKB"/>
</dbReference>
<dbReference type="GO" id="GO:0005813">
    <property type="term" value="C:centrosome"/>
    <property type="evidence" value="ECO:0007669"/>
    <property type="project" value="Ensembl"/>
</dbReference>
<dbReference type="GO" id="GO:0000775">
    <property type="term" value="C:chromosome, centromeric region"/>
    <property type="evidence" value="ECO:0007669"/>
    <property type="project" value="UniProtKB-SubCell"/>
</dbReference>
<dbReference type="GO" id="GO:0070418">
    <property type="term" value="C:DNA-dependent protein kinase complex"/>
    <property type="evidence" value="ECO:0007669"/>
    <property type="project" value="Ensembl"/>
</dbReference>
<dbReference type="GO" id="GO:0005769">
    <property type="term" value="C:early endosome"/>
    <property type="evidence" value="ECO:0007669"/>
    <property type="project" value="UniProtKB-SubCell"/>
</dbReference>
<dbReference type="GO" id="GO:0005783">
    <property type="term" value="C:endoplasmic reticulum"/>
    <property type="evidence" value="ECO:0007669"/>
    <property type="project" value="UniProtKB-SubCell"/>
</dbReference>
<dbReference type="GO" id="GO:0005770">
    <property type="term" value="C:late endosome"/>
    <property type="evidence" value="ECO:0007669"/>
    <property type="project" value="UniProtKB-SubCell"/>
</dbReference>
<dbReference type="GO" id="GO:0005764">
    <property type="term" value="C:lysosome"/>
    <property type="evidence" value="ECO:0007669"/>
    <property type="project" value="UniProtKB-SubCell"/>
</dbReference>
<dbReference type="GO" id="GO:0030496">
    <property type="term" value="C:midbody"/>
    <property type="evidence" value="ECO:0007669"/>
    <property type="project" value="UniProtKB-SubCell"/>
</dbReference>
<dbReference type="GO" id="GO:0045335">
    <property type="term" value="C:phagocytic vesicle"/>
    <property type="evidence" value="ECO:0000353"/>
    <property type="project" value="MGI"/>
</dbReference>
<dbReference type="GO" id="GO:0035032">
    <property type="term" value="C:phosphatidylinositol 3-kinase complex, class III"/>
    <property type="evidence" value="ECO:0000266"/>
    <property type="project" value="ComplexPortal"/>
</dbReference>
<dbReference type="GO" id="GO:0032991">
    <property type="term" value="C:protein-containing complex"/>
    <property type="evidence" value="ECO:0000314"/>
    <property type="project" value="MGI"/>
</dbReference>
<dbReference type="GO" id="GO:0017124">
    <property type="term" value="F:SH3 domain binding"/>
    <property type="evidence" value="ECO:0000353"/>
    <property type="project" value="MGI"/>
</dbReference>
<dbReference type="GO" id="GO:0000149">
    <property type="term" value="F:SNARE binding"/>
    <property type="evidence" value="ECO:0000314"/>
    <property type="project" value="MGI"/>
</dbReference>
<dbReference type="GO" id="GO:0097352">
    <property type="term" value="P:autophagosome maturation"/>
    <property type="evidence" value="ECO:0000250"/>
    <property type="project" value="UniProtKB"/>
</dbReference>
<dbReference type="GO" id="GO:0007098">
    <property type="term" value="P:centrosome cycle"/>
    <property type="evidence" value="ECO:0000315"/>
    <property type="project" value="UniProtKB"/>
</dbReference>
<dbReference type="GO" id="GO:0007059">
    <property type="term" value="P:chromosome segregation"/>
    <property type="evidence" value="ECO:0000315"/>
    <property type="project" value="UniProtKB"/>
</dbReference>
<dbReference type="GO" id="GO:0006281">
    <property type="term" value="P:DNA repair"/>
    <property type="evidence" value="ECO:0000315"/>
    <property type="project" value="UniProtKB"/>
</dbReference>
<dbReference type="GO" id="GO:0097680">
    <property type="term" value="P:double-strand break repair via classical nonhomologous end joining"/>
    <property type="evidence" value="ECO:0007669"/>
    <property type="project" value="Ensembl"/>
</dbReference>
<dbReference type="GO" id="GO:0051684">
    <property type="term" value="P:maintenance of Golgi location"/>
    <property type="evidence" value="ECO:0007669"/>
    <property type="project" value="Ensembl"/>
</dbReference>
<dbReference type="GO" id="GO:0036092">
    <property type="term" value="P:phosphatidylinositol-3-phosphate biosynthetic process"/>
    <property type="evidence" value="ECO:0000266"/>
    <property type="project" value="ComplexPortal"/>
</dbReference>
<dbReference type="GO" id="GO:0032801">
    <property type="term" value="P:receptor catabolic process"/>
    <property type="evidence" value="ECO:0007669"/>
    <property type="project" value="Ensembl"/>
</dbReference>
<dbReference type="GO" id="GO:0010506">
    <property type="term" value="P:regulation of autophagy"/>
    <property type="evidence" value="ECO:0000266"/>
    <property type="project" value="ComplexPortal"/>
</dbReference>
<dbReference type="GO" id="GO:0032465">
    <property type="term" value="P:regulation of cytokinesis"/>
    <property type="evidence" value="ECO:0007669"/>
    <property type="project" value="Ensembl"/>
</dbReference>
<dbReference type="GO" id="GO:0006890">
    <property type="term" value="P:retrograde vesicle-mediated transport, Golgi to endoplasmic reticulum"/>
    <property type="evidence" value="ECO:0007669"/>
    <property type="project" value="Ensembl"/>
</dbReference>
<dbReference type="GO" id="GO:0035493">
    <property type="term" value="P:SNARE complex assembly"/>
    <property type="evidence" value="ECO:0000315"/>
    <property type="project" value="MGI"/>
</dbReference>
<dbReference type="GO" id="GO:0007051">
    <property type="term" value="P:spindle organization"/>
    <property type="evidence" value="ECO:0000315"/>
    <property type="project" value="UniProtKB"/>
</dbReference>
<dbReference type="GO" id="GO:0046718">
    <property type="term" value="P:symbiont entry into host cell"/>
    <property type="evidence" value="ECO:0000315"/>
    <property type="project" value="MGI"/>
</dbReference>
<dbReference type="CDD" id="cd00030">
    <property type="entry name" value="C2"/>
    <property type="match status" value="1"/>
</dbReference>
<dbReference type="FunFam" id="2.60.40.150:FF:000148">
    <property type="entry name" value="UV radiation resistance associated gene"/>
    <property type="match status" value="1"/>
</dbReference>
<dbReference type="Gene3D" id="2.60.40.150">
    <property type="entry name" value="C2 domain"/>
    <property type="match status" value="1"/>
</dbReference>
<dbReference type="InterPro" id="IPR000008">
    <property type="entry name" value="C2_dom"/>
</dbReference>
<dbReference type="InterPro" id="IPR035892">
    <property type="entry name" value="C2_domain_sf"/>
</dbReference>
<dbReference type="InterPro" id="IPR018791">
    <property type="entry name" value="UV_resistance/autophagy_Atg14"/>
</dbReference>
<dbReference type="PANTHER" id="PTHR15157">
    <property type="entry name" value="UV RADIATION RESISTANCE-ASSOCIATED GENE PROTEIN"/>
    <property type="match status" value="1"/>
</dbReference>
<dbReference type="PANTHER" id="PTHR15157:SF5">
    <property type="entry name" value="UV RADIATION RESISTANCE-ASSOCIATED GENE PROTEIN"/>
    <property type="match status" value="1"/>
</dbReference>
<dbReference type="Pfam" id="PF10186">
    <property type="entry name" value="ATG14"/>
    <property type="match status" value="1"/>
</dbReference>
<dbReference type="Pfam" id="PF00168">
    <property type="entry name" value="C2"/>
    <property type="match status" value="1"/>
</dbReference>
<dbReference type="SUPFAM" id="SSF49562">
    <property type="entry name" value="C2 domain (Calcium/lipid-binding domain, CaLB)"/>
    <property type="match status" value="1"/>
</dbReference>
<dbReference type="PROSITE" id="PS50004">
    <property type="entry name" value="C2"/>
    <property type="match status" value="1"/>
</dbReference>
<gene>
    <name type="primary">Uvrag</name>
    <name type="synonym">Uvrag1</name>
</gene>
<reference key="1">
    <citation type="journal article" date="2005" name="Science">
        <title>The transcriptional landscape of the mammalian genome.</title>
        <authorList>
            <person name="Carninci P."/>
            <person name="Kasukawa T."/>
            <person name="Katayama S."/>
            <person name="Gough J."/>
            <person name="Frith M.C."/>
            <person name="Maeda N."/>
            <person name="Oyama R."/>
            <person name="Ravasi T."/>
            <person name="Lenhard B."/>
            <person name="Wells C."/>
            <person name="Kodzius R."/>
            <person name="Shimokawa K."/>
            <person name="Bajic V.B."/>
            <person name="Brenner S.E."/>
            <person name="Batalov S."/>
            <person name="Forrest A.R."/>
            <person name="Zavolan M."/>
            <person name="Davis M.J."/>
            <person name="Wilming L.G."/>
            <person name="Aidinis V."/>
            <person name="Allen J.E."/>
            <person name="Ambesi-Impiombato A."/>
            <person name="Apweiler R."/>
            <person name="Aturaliya R.N."/>
            <person name="Bailey T.L."/>
            <person name="Bansal M."/>
            <person name="Baxter L."/>
            <person name="Beisel K.W."/>
            <person name="Bersano T."/>
            <person name="Bono H."/>
            <person name="Chalk A.M."/>
            <person name="Chiu K.P."/>
            <person name="Choudhary V."/>
            <person name="Christoffels A."/>
            <person name="Clutterbuck D.R."/>
            <person name="Crowe M.L."/>
            <person name="Dalla E."/>
            <person name="Dalrymple B.P."/>
            <person name="de Bono B."/>
            <person name="Della Gatta G."/>
            <person name="di Bernardo D."/>
            <person name="Down T."/>
            <person name="Engstrom P."/>
            <person name="Fagiolini M."/>
            <person name="Faulkner G."/>
            <person name="Fletcher C.F."/>
            <person name="Fukushima T."/>
            <person name="Furuno M."/>
            <person name="Futaki S."/>
            <person name="Gariboldi M."/>
            <person name="Georgii-Hemming P."/>
            <person name="Gingeras T.R."/>
            <person name="Gojobori T."/>
            <person name="Green R.E."/>
            <person name="Gustincich S."/>
            <person name="Harbers M."/>
            <person name="Hayashi Y."/>
            <person name="Hensch T.K."/>
            <person name="Hirokawa N."/>
            <person name="Hill D."/>
            <person name="Huminiecki L."/>
            <person name="Iacono M."/>
            <person name="Ikeo K."/>
            <person name="Iwama A."/>
            <person name="Ishikawa T."/>
            <person name="Jakt M."/>
            <person name="Kanapin A."/>
            <person name="Katoh M."/>
            <person name="Kawasawa Y."/>
            <person name="Kelso J."/>
            <person name="Kitamura H."/>
            <person name="Kitano H."/>
            <person name="Kollias G."/>
            <person name="Krishnan S.P."/>
            <person name="Kruger A."/>
            <person name="Kummerfeld S.K."/>
            <person name="Kurochkin I.V."/>
            <person name="Lareau L.F."/>
            <person name="Lazarevic D."/>
            <person name="Lipovich L."/>
            <person name="Liu J."/>
            <person name="Liuni S."/>
            <person name="McWilliam S."/>
            <person name="Madan Babu M."/>
            <person name="Madera M."/>
            <person name="Marchionni L."/>
            <person name="Matsuda H."/>
            <person name="Matsuzawa S."/>
            <person name="Miki H."/>
            <person name="Mignone F."/>
            <person name="Miyake S."/>
            <person name="Morris K."/>
            <person name="Mottagui-Tabar S."/>
            <person name="Mulder N."/>
            <person name="Nakano N."/>
            <person name="Nakauchi H."/>
            <person name="Ng P."/>
            <person name="Nilsson R."/>
            <person name="Nishiguchi S."/>
            <person name="Nishikawa S."/>
            <person name="Nori F."/>
            <person name="Ohara O."/>
            <person name="Okazaki Y."/>
            <person name="Orlando V."/>
            <person name="Pang K.C."/>
            <person name="Pavan W.J."/>
            <person name="Pavesi G."/>
            <person name="Pesole G."/>
            <person name="Petrovsky N."/>
            <person name="Piazza S."/>
            <person name="Reed J."/>
            <person name="Reid J.F."/>
            <person name="Ring B.Z."/>
            <person name="Ringwald M."/>
            <person name="Rost B."/>
            <person name="Ruan Y."/>
            <person name="Salzberg S.L."/>
            <person name="Sandelin A."/>
            <person name="Schneider C."/>
            <person name="Schoenbach C."/>
            <person name="Sekiguchi K."/>
            <person name="Semple C.A."/>
            <person name="Seno S."/>
            <person name="Sessa L."/>
            <person name="Sheng Y."/>
            <person name="Shibata Y."/>
            <person name="Shimada H."/>
            <person name="Shimada K."/>
            <person name="Silva D."/>
            <person name="Sinclair B."/>
            <person name="Sperling S."/>
            <person name="Stupka E."/>
            <person name="Sugiura K."/>
            <person name="Sultana R."/>
            <person name="Takenaka Y."/>
            <person name="Taki K."/>
            <person name="Tammoja K."/>
            <person name="Tan S.L."/>
            <person name="Tang S."/>
            <person name="Taylor M.S."/>
            <person name="Tegner J."/>
            <person name="Teichmann S.A."/>
            <person name="Ueda H.R."/>
            <person name="van Nimwegen E."/>
            <person name="Verardo R."/>
            <person name="Wei C.L."/>
            <person name="Yagi K."/>
            <person name="Yamanishi H."/>
            <person name="Zabarovsky E."/>
            <person name="Zhu S."/>
            <person name="Zimmer A."/>
            <person name="Hide W."/>
            <person name="Bult C."/>
            <person name="Grimmond S.M."/>
            <person name="Teasdale R.D."/>
            <person name="Liu E.T."/>
            <person name="Brusic V."/>
            <person name="Quackenbush J."/>
            <person name="Wahlestedt C."/>
            <person name="Mattick J.S."/>
            <person name="Hume D.A."/>
            <person name="Kai C."/>
            <person name="Sasaki D."/>
            <person name="Tomaru Y."/>
            <person name="Fukuda S."/>
            <person name="Kanamori-Katayama M."/>
            <person name="Suzuki M."/>
            <person name="Aoki J."/>
            <person name="Arakawa T."/>
            <person name="Iida J."/>
            <person name="Imamura K."/>
            <person name="Itoh M."/>
            <person name="Kato T."/>
            <person name="Kawaji H."/>
            <person name="Kawagashira N."/>
            <person name="Kawashima T."/>
            <person name="Kojima M."/>
            <person name="Kondo S."/>
            <person name="Konno H."/>
            <person name="Nakano K."/>
            <person name="Ninomiya N."/>
            <person name="Nishio T."/>
            <person name="Okada M."/>
            <person name="Plessy C."/>
            <person name="Shibata K."/>
            <person name="Shiraki T."/>
            <person name="Suzuki S."/>
            <person name="Tagami M."/>
            <person name="Waki K."/>
            <person name="Watahiki A."/>
            <person name="Okamura-Oho Y."/>
            <person name="Suzuki H."/>
            <person name="Kawai J."/>
            <person name="Hayashizaki Y."/>
        </authorList>
    </citation>
    <scope>NUCLEOTIDE SEQUENCE [LARGE SCALE MRNA]</scope>
    <source>
        <strain>C57BL/6J</strain>
        <strain>NOD</strain>
        <tissue>Dendritic cell</tissue>
        <tissue>Medulla oblongata</tissue>
        <tissue>Thymus</tissue>
    </source>
</reference>
<reference key="2">
    <citation type="journal article" date="2009" name="PLoS Biol.">
        <title>Lineage-specific biology revealed by a finished genome assembly of the mouse.</title>
        <authorList>
            <person name="Church D.M."/>
            <person name="Goodstadt L."/>
            <person name="Hillier L.W."/>
            <person name="Zody M.C."/>
            <person name="Goldstein S."/>
            <person name="She X."/>
            <person name="Bult C.J."/>
            <person name="Agarwala R."/>
            <person name="Cherry J.L."/>
            <person name="DiCuccio M."/>
            <person name="Hlavina W."/>
            <person name="Kapustin Y."/>
            <person name="Meric P."/>
            <person name="Maglott D."/>
            <person name="Birtle Z."/>
            <person name="Marques A.C."/>
            <person name="Graves T."/>
            <person name="Zhou S."/>
            <person name="Teague B."/>
            <person name="Potamousis K."/>
            <person name="Churas C."/>
            <person name="Place M."/>
            <person name="Herschleb J."/>
            <person name="Runnheim R."/>
            <person name="Forrest D."/>
            <person name="Amos-Landgraf J."/>
            <person name="Schwartz D.C."/>
            <person name="Cheng Z."/>
            <person name="Lindblad-Toh K."/>
            <person name="Eichler E.E."/>
            <person name="Ponting C.P."/>
        </authorList>
    </citation>
    <scope>NUCLEOTIDE SEQUENCE [LARGE SCALE GENOMIC DNA]</scope>
    <source>
        <strain>C57BL/6J</strain>
    </source>
</reference>
<reference key="3">
    <citation type="journal article" date="2004" name="Genome Res.">
        <title>The status, quality, and expansion of the NIH full-length cDNA project: the Mammalian Gene Collection (MGC).</title>
        <authorList>
            <consortium name="The MGC Project Team"/>
        </authorList>
    </citation>
    <scope>NUCLEOTIDE SEQUENCE [LARGE SCALE MRNA]</scope>
    <source>
        <strain>FVB/N</strain>
    </source>
</reference>
<reference key="4">
    <citation type="journal article" date="2007" name="Proc. Natl. Acad. Sci. U.S.A.">
        <title>Large-scale phosphorylation analysis of mouse liver.</title>
        <authorList>
            <person name="Villen J."/>
            <person name="Beausoleil S.A."/>
            <person name="Gerber S.A."/>
            <person name="Gygi S.P."/>
        </authorList>
    </citation>
    <scope>IDENTIFICATION BY MASS SPECTROMETRY [LARGE SCALE ANALYSIS]</scope>
    <source>
        <tissue>Liver</tissue>
    </source>
</reference>
<reference key="5">
    <citation type="journal article" date="2009" name="Immunity">
        <title>The phagosomal proteome in interferon-gamma-activated macrophages.</title>
        <authorList>
            <person name="Trost M."/>
            <person name="English L."/>
            <person name="Lemieux S."/>
            <person name="Courcelles M."/>
            <person name="Desjardins M."/>
            <person name="Thibault P."/>
        </authorList>
    </citation>
    <scope>IDENTIFICATION BY MASS SPECTROMETRY [LARGE SCALE ANALYSIS]</scope>
</reference>
<reference key="6">
    <citation type="journal article" date="2010" name="Cell">
        <title>A tissue-specific atlas of mouse protein phosphorylation and expression.</title>
        <authorList>
            <person name="Huttlin E.L."/>
            <person name="Jedrychowski M.P."/>
            <person name="Elias J.E."/>
            <person name="Goswami T."/>
            <person name="Rad R."/>
            <person name="Beausoleil S.A."/>
            <person name="Villen J."/>
            <person name="Haas W."/>
            <person name="Sowa M.E."/>
            <person name="Gygi S.P."/>
        </authorList>
    </citation>
    <scope>PHOSPHORYLATION [LARGE SCALE ANALYSIS] AT SER-688</scope>
    <scope>IDENTIFICATION BY MASS SPECTROMETRY [LARGE SCALE ANALYSIS]</scope>
    <source>
        <tissue>Heart</tissue>
        <tissue>Kidney</tissue>
        <tissue>Liver</tissue>
        <tissue>Pancreas</tissue>
        <tissue>Spleen</tissue>
        <tissue>Testis</tissue>
    </source>
</reference>
<reference key="7">
    <citation type="journal article" date="2012" name="J. Biol. Chem.">
        <title>Receptor signaling lymphocyte-activation molecule family 1 (Slamf1) regulates membrane fusion and NADPH oxidase 2 (NOX2) activity by recruiting a Beclin-1/Vps34/ultraviolet radiation resistance-associated gene (UVRAG) complex.</title>
        <authorList>
            <person name="Ma C."/>
            <person name="Wang N."/>
            <person name="Detre C."/>
            <person name="Wang G."/>
            <person name="O'Keeffe M."/>
            <person name="Terhorst C."/>
        </authorList>
    </citation>
    <scope>INTERACTION WITH SLAMF1</scope>
</reference>
<feature type="chain" id="PRO_0000433403" description="UV radiation resistance-associated protein">
    <location>
        <begin position="1"/>
        <end position="698"/>
    </location>
</feature>
<feature type="domain" description="C2" evidence="3">
    <location>
        <begin position="23"/>
        <end position="149"/>
    </location>
</feature>
<feature type="region of interest" description="Disordered" evidence="4">
    <location>
        <begin position="1"/>
        <end position="21"/>
    </location>
</feature>
<feature type="region of interest" description="Sufficient for interaction with STX7; VTI1B AND STX8" evidence="1">
    <location>
        <begin position="199"/>
        <end position="268"/>
    </location>
</feature>
<feature type="region of interest" description="Sufficient for interaction with VPS16, required for interaction with CEP63" evidence="1">
    <location>
        <begin position="269"/>
        <end position="441"/>
    </location>
</feature>
<feature type="region of interest" description="Required for interaction with PRKDC, XRCC6 and XRCC5" evidence="1">
    <location>
        <begin position="442"/>
        <end position="698"/>
    </location>
</feature>
<feature type="region of interest" description="Disordered" evidence="4">
    <location>
        <begin position="477"/>
        <end position="551"/>
    </location>
</feature>
<feature type="region of interest" description="Disordered" evidence="4">
    <location>
        <begin position="565"/>
        <end position="586"/>
    </location>
</feature>
<feature type="coiled-coil region" evidence="2">
    <location>
        <begin position="200"/>
        <end position="304"/>
    </location>
</feature>
<feature type="compositionally biased region" description="Low complexity" evidence="4">
    <location>
        <begin position="1"/>
        <end position="10"/>
    </location>
</feature>
<feature type="modified residue" description="Phosphoserine" evidence="1">
    <location>
        <position position="492"/>
    </location>
</feature>
<feature type="modified residue" description="Phosphoserine; by MTOR" evidence="1">
    <location>
        <position position="497"/>
    </location>
</feature>
<feature type="modified residue" description="Phosphoserine" evidence="1">
    <location>
        <position position="507"/>
    </location>
</feature>
<feature type="modified residue" description="Phosphothreonine" evidence="1">
    <location>
        <position position="517"/>
    </location>
</feature>
<feature type="modified residue" description="Phosphoserine" evidence="1">
    <location>
        <position position="521"/>
    </location>
</feature>
<feature type="modified residue" description="Phosphoserine" evidence="1">
    <location>
        <position position="548"/>
    </location>
</feature>
<feature type="modified residue" description="Phosphoserine" evidence="1">
    <location>
        <position position="549"/>
    </location>
</feature>
<feature type="modified residue" description="Phosphoserine" evidence="1">
    <location>
        <position position="570"/>
    </location>
</feature>
<feature type="modified residue" description="Phosphoserine" evidence="8">
    <location>
        <position position="688"/>
    </location>
</feature>
<feature type="sequence conflict" description="In Ref. 3; AAH34176." evidence="6" ref="3">
    <original>N</original>
    <variation>H</variation>
    <location>
        <position position="335"/>
    </location>
</feature>
<feature type="sequence conflict" description="In Ref. 3; AAH34176." evidence="6" ref="3">
    <original>D</original>
    <variation>E</variation>
    <location>
        <position position="355"/>
    </location>
</feature>
<feature type="sequence conflict" description="In Ref. 1; BAC37120." evidence="6" ref="1">
    <original>S</original>
    <variation>T</variation>
    <location>
        <position position="497"/>
    </location>
</feature>
<feature type="helix" evidence="9">
    <location>
        <begin position="232"/>
        <end position="273"/>
    </location>
</feature>